<reference key="1">
    <citation type="journal article" date="1992" name="Proc. Natl. Acad. Sci. U.S.A.">
        <title>Unification of the ferritin family of proteins.</title>
        <authorList>
            <person name="Grossman M.J."/>
            <person name="Hinton S.M."/>
            <person name="Minak-Bernero V."/>
            <person name="Slaughter C."/>
            <person name="Stiefel E.I."/>
        </authorList>
    </citation>
    <scope>NUCLEOTIDE SEQUENCE [GENOMIC DNA]</scope>
</reference>
<reference key="2">
    <citation type="journal article" date="1991" name="Biochim. Biophys. Acta">
        <title>Physical, chemical and immunological properties of the bacterioferritins of Escherichia coli, Pseudomonas aeruginosa and Azotobacter vinelandii.</title>
        <authorList>
            <person name="Andrews S.C."/>
            <person name="Findlay J.B.C."/>
            <person name="Guest J.R."/>
            <person name="Harrison P.M."/>
            <person name="Keen J.N."/>
            <person name="Smith J.M.A."/>
        </authorList>
    </citation>
    <scope>PROTEIN SEQUENCE OF 1-70</scope>
</reference>
<keyword id="KW-0002">3D-structure</keyword>
<keyword id="KW-0903">Direct protein sequencing</keyword>
<keyword id="KW-0349">Heme</keyword>
<keyword id="KW-0406">Ion transport</keyword>
<keyword id="KW-0408">Iron</keyword>
<keyword id="KW-0409">Iron storage</keyword>
<keyword id="KW-0410">Iron transport</keyword>
<keyword id="KW-0479">Metal-binding</keyword>
<keyword id="KW-0560">Oxidoreductase</keyword>
<keyword id="KW-0813">Transport</keyword>
<accession>P22759</accession>
<organism>
    <name type="scientific">Azotobacter vinelandii</name>
    <dbReference type="NCBI Taxonomy" id="354"/>
    <lineage>
        <taxon>Bacteria</taxon>
        <taxon>Pseudomonadati</taxon>
        <taxon>Pseudomonadota</taxon>
        <taxon>Gammaproteobacteria</taxon>
        <taxon>Pseudomonadales</taxon>
        <taxon>Pseudomonadaceae</taxon>
        <taxon>Azotobacter</taxon>
    </lineage>
</organism>
<name>BFR_AZOVI</name>
<feature type="chain" id="PRO_0000192588" description="Bacterioferritin">
    <location>
        <begin position="1"/>
        <end position="156"/>
    </location>
</feature>
<feature type="domain" description="Ferritin-like diiron" evidence="3">
    <location>
        <begin position="1"/>
        <end position="145"/>
    </location>
</feature>
<feature type="binding site" evidence="3">
    <location>
        <position position="18"/>
    </location>
    <ligand>
        <name>Fe cation</name>
        <dbReference type="ChEBI" id="CHEBI:24875"/>
        <label>1</label>
    </ligand>
</feature>
<feature type="binding site" evidence="3">
    <location>
        <position position="51"/>
    </location>
    <ligand>
        <name>Fe cation</name>
        <dbReference type="ChEBI" id="CHEBI:24875"/>
        <label>1</label>
    </ligand>
</feature>
<feature type="binding site" evidence="3">
    <location>
        <position position="51"/>
    </location>
    <ligand>
        <name>Fe cation</name>
        <dbReference type="ChEBI" id="CHEBI:24875"/>
        <label>2</label>
    </ligand>
</feature>
<feature type="binding site" description="axial binding residue" evidence="3">
    <location>
        <position position="52"/>
    </location>
    <ligand>
        <name>heme b</name>
        <dbReference type="ChEBI" id="CHEBI:60344"/>
        <note>ligand shared between dimeric partners</note>
    </ligand>
    <ligandPart>
        <name>Fe</name>
        <dbReference type="ChEBI" id="CHEBI:18248"/>
    </ligandPart>
</feature>
<feature type="binding site" evidence="3">
    <location>
        <position position="54"/>
    </location>
    <ligand>
        <name>Fe cation</name>
        <dbReference type="ChEBI" id="CHEBI:24875"/>
        <label>1</label>
    </ligand>
</feature>
<feature type="binding site" evidence="3">
    <location>
        <position position="94"/>
    </location>
    <ligand>
        <name>Fe cation</name>
        <dbReference type="ChEBI" id="CHEBI:24875"/>
        <label>2</label>
    </ligand>
</feature>
<feature type="binding site" evidence="3">
    <location>
        <position position="127"/>
    </location>
    <ligand>
        <name>Fe cation</name>
        <dbReference type="ChEBI" id="CHEBI:24875"/>
        <label>1</label>
    </ligand>
</feature>
<feature type="binding site" evidence="3">
    <location>
        <position position="127"/>
    </location>
    <ligand>
        <name>Fe cation</name>
        <dbReference type="ChEBI" id="CHEBI:24875"/>
        <label>2</label>
    </ligand>
</feature>
<feature type="binding site" evidence="3">
    <location>
        <position position="130"/>
    </location>
    <ligand>
        <name>Fe cation</name>
        <dbReference type="ChEBI" id="CHEBI:24875"/>
        <label>2</label>
    </ligand>
</feature>
<feature type="helix" evidence="5">
    <location>
        <begin position="5"/>
        <end position="34"/>
    </location>
</feature>
<feature type="helix" evidence="5">
    <location>
        <begin position="38"/>
        <end position="64"/>
    </location>
</feature>
<feature type="helix" evidence="5">
    <location>
        <begin position="83"/>
        <end position="110"/>
    </location>
</feature>
<feature type="helix" evidence="5">
    <location>
        <begin position="114"/>
        <end position="144"/>
    </location>
</feature>
<feature type="helix" evidence="5">
    <location>
        <begin position="146"/>
        <end position="151"/>
    </location>
</feature>
<comment type="function">
    <text evidence="1">Iron-storage protein, whose ferroxidase center binds Fe(2+), oxidizes it using dioxygen to Fe(3+), and participates in the subsequent Fe(3+) oxide mineral core formation within the central cavity of the BFR protein shell.</text>
</comment>
<comment type="catalytic activity">
    <reaction>
        <text>4 Fe(2+) + O2 + 4 H(+) = 4 Fe(3+) + 2 H2O</text>
        <dbReference type="Rhea" id="RHEA:11148"/>
        <dbReference type="ChEBI" id="CHEBI:15377"/>
        <dbReference type="ChEBI" id="CHEBI:15378"/>
        <dbReference type="ChEBI" id="CHEBI:15379"/>
        <dbReference type="ChEBI" id="CHEBI:29033"/>
        <dbReference type="ChEBI" id="CHEBI:29034"/>
        <dbReference type="EC" id="1.16.3.1"/>
    </reaction>
</comment>
<comment type="catalytic activity">
    <reaction evidence="2">
        <text>Fe(2+)(in) = Fe(2+)(out)</text>
        <dbReference type="Rhea" id="RHEA:28486"/>
        <dbReference type="ChEBI" id="CHEBI:29033"/>
    </reaction>
</comment>
<comment type="cofactor">
    <cofactor evidence="1">
        <name>heme b</name>
        <dbReference type="ChEBI" id="CHEBI:60344"/>
    </cofactor>
    <text evidence="1">Binds 1 heme b (iron(II)-protoporphyrin IX) group per dimer.</text>
</comment>
<comment type="subunit">
    <text evidence="1">Homooligomer of 24 subunits, arranged as 12 dimers, that are packed together to form an approximately spherical molecule with a central cavity, in which large amounts of iron can be deposited.</text>
</comment>
<comment type="similarity">
    <text evidence="4">Belongs to the bacterioferritin family.</text>
</comment>
<sequence length="156" mass="18105">MKGDKIVIQHLNKILGNELIAINQYFLHARMYEDWGLEKLGKHEYHESIDEMKHADKLIKRILFLEGLPNLQELGKLLIGEHTKEMLECDLKLEQAGLPDLKAAIAYCESVGDYASRELLEDILESEEDHIDWLETQLDLIDKIGLENYLQSQMDE</sequence>
<evidence type="ECO:0000250" key="1"/>
<evidence type="ECO:0000250" key="2">
    <source>
        <dbReference type="UniProtKB" id="Q9HWF9"/>
    </source>
</evidence>
<evidence type="ECO:0000255" key="3">
    <source>
        <dbReference type="PROSITE-ProRule" id="PRU00085"/>
    </source>
</evidence>
<evidence type="ECO:0000305" key="4"/>
<evidence type="ECO:0007829" key="5">
    <source>
        <dbReference type="PDB" id="2FKZ"/>
    </source>
</evidence>
<dbReference type="EC" id="1.16.3.1"/>
<dbReference type="EMBL" id="M83692">
    <property type="protein sequence ID" value="AAA22121.1"/>
    <property type="molecule type" value="Genomic_DNA"/>
</dbReference>
<dbReference type="PIR" id="A41983">
    <property type="entry name" value="A41983"/>
</dbReference>
<dbReference type="RefSeq" id="WP_012700041.1">
    <property type="nucleotide sequence ID" value="NZ_FPKM01000033.1"/>
</dbReference>
<dbReference type="PDB" id="1SOF">
    <property type="method" value="X-ray"/>
    <property type="resolution" value="2.60 A"/>
    <property type="chains" value="A/B/C/D/E/F/G/H=1-156"/>
</dbReference>
<dbReference type="PDB" id="2FKZ">
    <property type="method" value="X-ray"/>
    <property type="resolution" value="2.00 A"/>
    <property type="chains" value="A/B/C/D/E/F/G/H=1-155"/>
</dbReference>
<dbReference type="PDB" id="2FL0">
    <property type="method" value="X-ray"/>
    <property type="resolution" value="2.70 A"/>
    <property type="chains" value="A/B/C/D/E/F/G/H=1-155"/>
</dbReference>
<dbReference type="PDBsum" id="1SOF"/>
<dbReference type="PDBsum" id="2FKZ"/>
<dbReference type="PDBsum" id="2FL0"/>
<dbReference type="SMR" id="P22759"/>
<dbReference type="GeneID" id="88184705"/>
<dbReference type="OMA" id="YQRLFHV"/>
<dbReference type="EvolutionaryTrace" id="P22759"/>
<dbReference type="GO" id="GO:0005829">
    <property type="term" value="C:cytosol"/>
    <property type="evidence" value="ECO:0007669"/>
    <property type="project" value="TreeGrafter"/>
</dbReference>
<dbReference type="GO" id="GO:0008199">
    <property type="term" value="F:ferric iron binding"/>
    <property type="evidence" value="ECO:0007669"/>
    <property type="project" value="InterPro"/>
</dbReference>
<dbReference type="GO" id="GO:0004322">
    <property type="term" value="F:ferroxidase activity"/>
    <property type="evidence" value="ECO:0007669"/>
    <property type="project" value="UniProtKB-EC"/>
</dbReference>
<dbReference type="GO" id="GO:0020037">
    <property type="term" value="F:heme binding"/>
    <property type="evidence" value="ECO:0007669"/>
    <property type="project" value="TreeGrafter"/>
</dbReference>
<dbReference type="GO" id="GO:0006879">
    <property type="term" value="P:intracellular iron ion homeostasis"/>
    <property type="evidence" value="ECO:0007669"/>
    <property type="project" value="UniProtKB-KW"/>
</dbReference>
<dbReference type="GO" id="GO:0006826">
    <property type="term" value="P:iron ion transport"/>
    <property type="evidence" value="ECO:0007669"/>
    <property type="project" value="UniProtKB-KW"/>
</dbReference>
<dbReference type="CDD" id="cd00907">
    <property type="entry name" value="Bacterioferritin"/>
    <property type="match status" value="1"/>
</dbReference>
<dbReference type="FunFam" id="1.20.1260.10:FF:000005">
    <property type="entry name" value="Bacterioferritin"/>
    <property type="match status" value="1"/>
</dbReference>
<dbReference type="Gene3D" id="1.20.1260.10">
    <property type="match status" value="1"/>
</dbReference>
<dbReference type="InterPro" id="IPR002024">
    <property type="entry name" value="Bacterioferritin"/>
</dbReference>
<dbReference type="InterPro" id="IPR012347">
    <property type="entry name" value="Ferritin-like"/>
</dbReference>
<dbReference type="InterPro" id="IPR009040">
    <property type="entry name" value="Ferritin-like_diiron"/>
</dbReference>
<dbReference type="InterPro" id="IPR009078">
    <property type="entry name" value="Ferritin-like_SF"/>
</dbReference>
<dbReference type="InterPro" id="IPR008331">
    <property type="entry name" value="Ferritin_DPS_dom"/>
</dbReference>
<dbReference type="NCBIfam" id="TIGR00754">
    <property type="entry name" value="bfr"/>
    <property type="match status" value="1"/>
</dbReference>
<dbReference type="PANTHER" id="PTHR30295">
    <property type="entry name" value="BACTERIOFERRITIN"/>
    <property type="match status" value="1"/>
</dbReference>
<dbReference type="PANTHER" id="PTHR30295:SF0">
    <property type="entry name" value="BACTERIOFERRITIN"/>
    <property type="match status" value="1"/>
</dbReference>
<dbReference type="Pfam" id="PF00210">
    <property type="entry name" value="Ferritin"/>
    <property type="match status" value="1"/>
</dbReference>
<dbReference type="PIRSF" id="PIRSF002560">
    <property type="entry name" value="Bacterioferritin"/>
    <property type="match status" value="1"/>
</dbReference>
<dbReference type="PRINTS" id="PR00601">
    <property type="entry name" value="BACFERRITIN"/>
</dbReference>
<dbReference type="SUPFAM" id="SSF47240">
    <property type="entry name" value="Ferritin-like"/>
    <property type="match status" value="1"/>
</dbReference>
<dbReference type="PROSITE" id="PS00549">
    <property type="entry name" value="BACTERIOFERRITIN"/>
    <property type="match status" value="1"/>
</dbReference>
<dbReference type="PROSITE" id="PS50905">
    <property type="entry name" value="FERRITIN_LIKE"/>
    <property type="match status" value="1"/>
</dbReference>
<protein>
    <recommendedName>
        <fullName>Bacterioferritin</fullName>
        <shortName>BFR</shortName>
        <ecNumber>1.16.3.1</ecNumber>
    </recommendedName>
    <alternativeName>
        <fullName>Cytochrome b-557.5</fullName>
    </alternativeName>
</protein>
<gene>
    <name type="primary">bfr</name>
</gene>
<proteinExistence type="evidence at protein level"/>